<comment type="function">
    <text evidence="1">Catalyzes the reversible oxidation of malate to oxaloacetate.</text>
</comment>
<comment type="catalytic activity">
    <reaction evidence="1">
        <text>(S)-malate + NAD(+) = oxaloacetate + NADH + H(+)</text>
        <dbReference type="Rhea" id="RHEA:21432"/>
        <dbReference type="ChEBI" id="CHEBI:15378"/>
        <dbReference type="ChEBI" id="CHEBI:15589"/>
        <dbReference type="ChEBI" id="CHEBI:16452"/>
        <dbReference type="ChEBI" id="CHEBI:57540"/>
        <dbReference type="ChEBI" id="CHEBI:57945"/>
        <dbReference type="EC" id="1.1.1.37"/>
    </reaction>
</comment>
<comment type="similarity">
    <text evidence="1">Belongs to the LDH/MDH superfamily. MDH type 3 family.</text>
</comment>
<feature type="chain" id="PRO_1000026474" description="Malate dehydrogenase">
    <location>
        <begin position="1"/>
        <end position="319"/>
    </location>
</feature>
<feature type="active site" description="Proton acceptor" evidence="1">
    <location>
        <position position="176"/>
    </location>
</feature>
<feature type="binding site" evidence="1">
    <location>
        <begin position="10"/>
        <end position="15"/>
    </location>
    <ligand>
        <name>NAD(+)</name>
        <dbReference type="ChEBI" id="CHEBI:57540"/>
    </ligand>
</feature>
<feature type="binding site" evidence="1">
    <location>
        <position position="34"/>
    </location>
    <ligand>
        <name>NAD(+)</name>
        <dbReference type="ChEBI" id="CHEBI:57540"/>
    </ligand>
</feature>
<feature type="binding site" evidence="1">
    <location>
        <position position="83"/>
    </location>
    <ligand>
        <name>substrate</name>
    </ligand>
</feature>
<feature type="binding site" evidence="1">
    <location>
        <position position="89"/>
    </location>
    <ligand>
        <name>substrate</name>
    </ligand>
</feature>
<feature type="binding site" evidence="1">
    <location>
        <position position="96"/>
    </location>
    <ligand>
        <name>NAD(+)</name>
        <dbReference type="ChEBI" id="CHEBI:57540"/>
    </ligand>
</feature>
<feature type="binding site" evidence="1">
    <location>
        <begin position="119"/>
        <end position="121"/>
    </location>
    <ligand>
        <name>NAD(+)</name>
        <dbReference type="ChEBI" id="CHEBI:57540"/>
    </ligand>
</feature>
<feature type="binding site" evidence="1">
    <location>
        <position position="121"/>
    </location>
    <ligand>
        <name>substrate</name>
    </ligand>
</feature>
<feature type="binding site" evidence="1">
    <location>
        <position position="152"/>
    </location>
    <ligand>
        <name>substrate</name>
    </ligand>
</feature>
<organism>
    <name type="scientific">Francisella tularensis subsp. tularensis (strain WY96-3418)</name>
    <dbReference type="NCBI Taxonomy" id="418136"/>
    <lineage>
        <taxon>Bacteria</taxon>
        <taxon>Pseudomonadati</taxon>
        <taxon>Pseudomonadota</taxon>
        <taxon>Gammaproteobacteria</taxon>
        <taxon>Thiotrichales</taxon>
        <taxon>Francisellaceae</taxon>
        <taxon>Francisella</taxon>
    </lineage>
</organism>
<accession>A4IY35</accession>
<name>MDH_FRATW</name>
<sequence length="319" mass="34091">MARKKITLVGAGNIGGTLAHLALIKQLGDVVLFDIAQGMPNGKALDLLQTCPIEGVDFKVRGTNDYKDLENSDVVIVTAGVPRKPGMSRDDLLGINIKVMQTVGEGIKHNCPNAFVICITNPLDIMVNMLQKFSGVPDNKIVGMAGVLDSARFRTFLADELNVSVQQVQAYVMGGHGDTMVPLTKMSNVAGVSLEQLVKEGKLKQERLDAIVSRTRSGGGEIVALLKTGSAYYAPAAAGIQMAESFLKDKKMILPCAAKVKAGMYGLDEDLFVGVPTEISANGVRPIEVEISDKEREQLQVSINAIKDLNKAAAEILAK</sequence>
<keyword id="KW-0520">NAD</keyword>
<keyword id="KW-0560">Oxidoreductase</keyword>
<keyword id="KW-0816">Tricarboxylic acid cycle</keyword>
<protein>
    <recommendedName>
        <fullName evidence="1">Malate dehydrogenase</fullName>
        <ecNumber evidence="1">1.1.1.37</ecNumber>
    </recommendedName>
</protein>
<dbReference type="EC" id="1.1.1.37" evidence="1"/>
<dbReference type="EMBL" id="CP000608">
    <property type="protein sequence ID" value="ABO46836.1"/>
    <property type="molecule type" value="Genomic_DNA"/>
</dbReference>
<dbReference type="RefSeq" id="WP_003026154.1">
    <property type="nucleotide sequence ID" value="NC_009257.1"/>
</dbReference>
<dbReference type="SMR" id="A4IY35"/>
<dbReference type="KEGG" id="ftw:FTW_1007"/>
<dbReference type="HOGENOM" id="CLU_045401_2_1_6"/>
<dbReference type="GO" id="GO:0004459">
    <property type="term" value="F:L-lactate dehydrogenase activity"/>
    <property type="evidence" value="ECO:0007669"/>
    <property type="project" value="TreeGrafter"/>
</dbReference>
<dbReference type="GO" id="GO:0030060">
    <property type="term" value="F:L-malate dehydrogenase (NAD+) activity"/>
    <property type="evidence" value="ECO:0007669"/>
    <property type="project" value="UniProtKB-UniRule"/>
</dbReference>
<dbReference type="GO" id="GO:0006089">
    <property type="term" value="P:lactate metabolic process"/>
    <property type="evidence" value="ECO:0007669"/>
    <property type="project" value="TreeGrafter"/>
</dbReference>
<dbReference type="GO" id="GO:0006099">
    <property type="term" value="P:tricarboxylic acid cycle"/>
    <property type="evidence" value="ECO:0007669"/>
    <property type="project" value="UniProtKB-UniRule"/>
</dbReference>
<dbReference type="CDD" id="cd01339">
    <property type="entry name" value="LDH-like_MDH"/>
    <property type="match status" value="1"/>
</dbReference>
<dbReference type="FunFam" id="3.40.50.720:FF:000018">
    <property type="entry name" value="Malate dehydrogenase"/>
    <property type="match status" value="1"/>
</dbReference>
<dbReference type="FunFam" id="3.90.110.10:FF:000004">
    <property type="entry name" value="Malate dehydrogenase"/>
    <property type="match status" value="1"/>
</dbReference>
<dbReference type="Gene3D" id="3.90.110.10">
    <property type="entry name" value="Lactate dehydrogenase/glycoside hydrolase, family 4, C-terminal"/>
    <property type="match status" value="1"/>
</dbReference>
<dbReference type="Gene3D" id="3.40.50.720">
    <property type="entry name" value="NAD(P)-binding Rossmann-like Domain"/>
    <property type="match status" value="1"/>
</dbReference>
<dbReference type="HAMAP" id="MF_00487">
    <property type="entry name" value="Malate_dehydrog_3"/>
    <property type="match status" value="1"/>
</dbReference>
<dbReference type="InterPro" id="IPR001557">
    <property type="entry name" value="L-lactate/malate_DH"/>
</dbReference>
<dbReference type="InterPro" id="IPR022383">
    <property type="entry name" value="Lactate/malate_DH_C"/>
</dbReference>
<dbReference type="InterPro" id="IPR001236">
    <property type="entry name" value="Lactate/malate_DH_N"/>
</dbReference>
<dbReference type="InterPro" id="IPR015955">
    <property type="entry name" value="Lactate_DH/Glyco_Ohase_4_C"/>
</dbReference>
<dbReference type="InterPro" id="IPR011275">
    <property type="entry name" value="Malate_DH_type3"/>
</dbReference>
<dbReference type="InterPro" id="IPR036291">
    <property type="entry name" value="NAD(P)-bd_dom_sf"/>
</dbReference>
<dbReference type="NCBIfam" id="TIGR01763">
    <property type="entry name" value="MalateDH_bact"/>
    <property type="match status" value="1"/>
</dbReference>
<dbReference type="NCBIfam" id="NF004863">
    <property type="entry name" value="PRK06223.1"/>
    <property type="match status" value="1"/>
</dbReference>
<dbReference type="PANTHER" id="PTHR43128">
    <property type="entry name" value="L-2-HYDROXYCARBOXYLATE DEHYDROGENASE (NAD(P)(+))"/>
    <property type="match status" value="1"/>
</dbReference>
<dbReference type="PANTHER" id="PTHR43128:SF16">
    <property type="entry name" value="L-LACTATE DEHYDROGENASE"/>
    <property type="match status" value="1"/>
</dbReference>
<dbReference type="Pfam" id="PF02866">
    <property type="entry name" value="Ldh_1_C"/>
    <property type="match status" value="1"/>
</dbReference>
<dbReference type="Pfam" id="PF00056">
    <property type="entry name" value="Ldh_1_N"/>
    <property type="match status" value="1"/>
</dbReference>
<dbReference type="PIRSF" id="PIRSF000102">
    <property type="entry name" value="Lac_mal_DH"/>
    <property type="match status" value="1"/>
</dbReference>
<dbReference type="PRINTS" id="PR00086">
    <property type="entry name" value="LLDHDRGNASE"/>
</dbReference>
<dbReference type="SUPFAM" id="SSF56327">
    <property type="entry name" value="LDH C-terminal domain-like"/>
    <property type="match status" value="1"/>
</dbReference>
<dbReference type="SUPFAM" id="SSF51735">
    <property type="entry name" value="NAD(P)-binding Rossmann-fold domains"/>
    <property type="match status" value="1"/>
</dbReference>
<reference key="1">
    <citation type="journal article" date="2007" name="PLoS ONE">
        <title>Complete genomic characterization of a pathogenic A.II strain of Francisella tularensis subspecies tularensis.</title>
        <authorList>
            <person name="Beckstrom-Sternberg S.M."/>
            <person name="Auerbach R.K."/>
            <person name="Godbole S."/>
            <person name="Pearson J.V."/>
            <person name="Beckstrom-Sternberg J.S."/>
            <person name="Deng Z."/>
            <person name="Munk C."/>
            <person name="Kubota K."/>
            <person name="Zhou Y."/>
            <person name="Bruce D."/>
            <person name="Noronha J."/>
            <person name="Scheuermann R.H."/>
            <person name="Wang A."/>
            <person name="Wei X."/>
            <person name="Wang J."/>
            <person name="Hao J."/>
            <person name="Wagner D.M."/>
            <person name="Brettin T.S."/>
            <person name="Brown N."/>
            <person name="Gilna P."/>
            <person name="Keim P.S."/>
        </authorList>
    </citation>
    <scope>NUCLEOTIDE SEQUENCE [LARGE SCALE GENOMIC DNA]</scope>
    <source>
        <strain>WY96-3418</strain>
    </source>
</reference>
<evidence type="ECO:0000255" key="1">
    <source>
        <dbReference type="HAMAP-Rule" id="MF_00487"/>
    </source>
</evidence>
<proteinExistence type="inferred from homology"/>
<gene>
    <name evidence="1" type="primary">mdh</name>
    <name type="ordered locus">FTW_1007</name>
</gene>